<reference evidence="2" key="1">
    <citation type="journal article" date="2002" name="Science">
        <title>The genome sequence of the malaria mosquito Anopheles gambiae.</title>
        <authorList>
            <person name="Holt R.A."/>
            <person name="Subramanian G.M."/>
            <person name="Halpern A."/>
            <person name="Sutton G.G."/>
            <person name="Charlab R."/>
            <person name="Nusskern D.R."/>
            <person name="Wincker P."/>
            <person name="Clark A.G."/>
            <person name="Ribeiro J.M.C."/>
            <person name="Wides R."/>
            <person name="Salzberg S.L."/>
            <person name="Loftus B.J."/>
            <person name="Yandell M.D."/>
            <person name="Majoros W.H."/>
            <person name="Rusch D.B."/>
            <person name="Lai Z."/>
            <person name="Kraft C.L."/>
            <person name="Abril J.F."/>
            <person name="Anthouard V."/>
            <person name="Arensburger P."/>
            <person name="Atkinson P.W."/>
            <person name="Baden H."/>
            <person name="de Berardinis V."/>
            <person name="Baldwin D."/>
            <person name="Benes V."/>
            <person name="Biedler J."/>
            <person name="Blass C."/>
            <person name="Bolanos R."/>
            <person name="Boscus D."/>
            <person name="Barnstead M."/>
            <person name="Cai S."/>
            <person name="Center A."/>
            <person name="Chaturverdi K."/>
            <person name="Christophides G.K."/>
            <person name="Chrystal M.A.M."/>
            <person name="Clamp M."/>
            <person name="Cravchik A."/>
            <person name="Curwen V."/>
            <person name="Dana A."/>
            <person name="Delcher A."/>
            <person name="Dew I."/>
            <person name="Evans C.A."/>
            <person name="Flanigan M."/>
            <person name="Grundschober-Freimoser A."/>
            <person name="Friedli L."/>
            <person name="Gu Z."/>
            <person name="Guan P."/>
            <person name="Guigo R."/>
            <person name="Hillenmeyer M.E."/>
            <person name="Hladun S.L."/>
            <person name="Hogan J.R."/>
            <person name="Hong Y.S."/>
            <person name="Hoover J."/>
            <person name="Jaillon O."/>
            <person name="Ke Z."/>
            <person name="Kodira C.D."/>
            <person name="Kokoza E."/>
            <person name="Koutsos A."/>
            <person name="Letunic I."/>
            <person name="Levitsky A.A."/>
            <person name="Liang Y."/>
            <person name="Lin J.-J."/>
            <person name="Lobo N.F."/>
            <person name="Lopez J.R."/>
            <person name="Malek J.A."/>
            <person name="McIntosh T.C."/>
            <person name="Meister S."/>
            <person name="Miller J.R."/>
            <person name="Mobarry C."/>
            <person name="Mongin E."/>
            <person name="Murphy S.D."/>
            <person name="O'Brochta D.A."/>
            <person name="Pfannkoch C."/>
            <person name="Qi R."/>
            <person name="Regier M.A."/>
            <person name="Remington K."/>
            <person name="Shao H."/>
            <person name="Sharakhova M.V."/>
            <person name="Sitter C.D."/>
            <person name="Shetty J."/>
            <person name="Smith T.J."/>
            <person name="Strong R."/>
            <person name="Sun J."/>
            <person name="Thomasova D."/>
            <person name="Ton L.Q."/>
            <person name="Topalis P."/>
            <person name="Tu Z.J."/>
            <person name="Unger M.F."/>
            <person name="Walenz B."/>
            <person name="Wang A.H."/>
            <person name="Wang J."/>
            <person name="Wang M."/>
            <person name="Wang X."/>
            <person name="Woodford K.J."/>
            <person name="Wortman J.R."/>
            <person name="Wu M."/>
            <person name="Yao A."/>
            <person name="Zdobnov E.M."/>
            <person name="Zhang H."/>
            <person name="Zhao Q."/>
            <person name="Zhao S."/>
            <person name="Zhu S.C."/>
            <person name="Zhimulev I."/>
            <person name="Coluzzi M."/>
            <person name="della Torre A."/>
            <person name="Roth C.W."/>
            <person name="Louis C."/>
            <person name="Kalush F."/>
            <person name="Mural R.J."/>
            <person name="Myers E.W."/>
            <person name="Adams M.D."/>
            <person name="Smith H.O."/>
            <person name="Broder S."/>
            <person name="Gardner M.J."/>
            <person name="Fraser C.M."/>
            <person name="Birney E."/>
            <person name="Bork P."/>
            <person name="Brey P.T."/>
            <person name="Venter J.C."/>
            <person name="Weissenbach J."/>
            <person name="Kafatos F.C."/>
            <person name="Collins F.H."/>
            <person name="Hoffman S.L."/>
        </authorList>
    </citation>
    <scope>NUCLEOTIDE SEQUENCE [LARGE SCALE GENOMIC DNA]</scope>
    <source>
        <strain evidence="2">PEST</strain>
    </source>
</reference>
<organism>
    <name type="scientific">Anopheles gambiae</name>
    <name type="common">African malaria mosquito</name>
    <dbReference type="NCBI Taxonomy" id="7165"/>
    <lineage>
        <taxon>Eukaryota</taxon>
        <taxon>Metazoa</taxon>
        <taxon>Ecdysozoa</taxon>
        <taxon>Arthropoda</taxon>
        <taxon>Hexapoda</taxon>
        <taxon>Insecta</taxon>
        <taxon>Pterygota</taxon>
        <taxon>Neoptera</taxon>
        <taxon>Endopterygota</taxon>
        <taxon>Diptera</taxon>
        <taxon>Nematocera</taxon>
        <taxon>Culicoidea</taxon>
        <taxon>Culicidae</taxon>
        <taxon>Anophelinae</taxon>
        <taxon>Anopheles</taxon>
    </lineage>
</organism>
<keyword id="KW-0472">Membrane</keyword>
<keyword id="KW-1185">Reference proteome</keyword>
<keyword id="KW-0812">Transmembrane</keyword>
<keyword id="KW-1133">Transmembrane helix</keyword>
<comment type="subcellular location">
    <subcellularLocation>
        <location evidence="1">Membrane</location>
        <topology evidence="1">Single-pass membrane protein</topology>
    </subcellularLocation>
</comment>
<comment type="similarity">
    <text evidence="1">Belongs to the band 7/mec-2 family.</text>
</comment>
<dbReference type="EMBL" id="AAAB01008905">
    <property type="protein sequence ID" value="EAA09720.4"/>
    <property type="molecule type" value="Genomic_DNA"/>
</dbReference>
<dbReference type="RefSeq" id="XP_314315.3">
    <property type="nucleotide sequence ID" value="XM_314315.3"/>
</dbReference>
<dbReference type="SMR" id="Q7PPU9"/>
<dbReference type="FunCoup" id="Q7PPU9">
    <property type="interactions" value="102"/>
</dbReference>
<dbReference type="STRING" id="7165.Q7PPU9"/>
<dbReference type="PaxDb" id="7165-AGAP004871-PA"/>
<dbReference type="GeneID" id="1275086"/>
<dbReference type="KEGG" id="aga:1275086"/>
<dbReference type="VEuPathDB" id="VectorBase:AGAMI1_007785"/>
<dbReference type="VEuPathDB" id="VectorBase:AGAP004871"/>
<dbReference type="eggNOG" id="KOG2621">
    <property type="taxonomic scope" value="Eukaryota"/>
</dbReference>
<dbReference type="HOGENOM" id="CLU_024949_3_0_1"/>
<dbReference type="InParanoid" id="Q7PPU9"/>
<dbReference type="OMA" id="CEHILYF"/>
<dbReference type="PhylomeDB" id="Q7PPU9"/>
<dbReference type="Proteomes" id="UP000007062">
    <property type="component" value="Chromosome 2L"/>
</dbReference>
<dbReference type="GO" id="GO:0005886">
    <property type="term" value="C:plasma membrane"/>
    <property type="evidence" value="ECO:0000318"/>
    <property type="project" value="GO_Central"/>
</dbReference>
<dbReference type="CDD" id="cd03403">
    <property type="entry name" value="SPFH_stomatin"/>
    <property type="match status" value="1"/>
</dbReference>
<dbReference type="FunFam" id="3.30.479.30:FF:000002">
    <property type="entry name" value="band 7 protein AGAP004871"/>
    <property type="match status" value="1"/>
</dbReference>
<dbReference type="Gene3D" id="6.10.250.2090">
    <property type="match status" value="1"/>
</dbReference>
<dbReference type="Gene3D" id="3.30.479.30">
    <property type="entry name" value="Band 7 domain"/>
    <property type="match status" value="1"/>
</dbReference>
<dbReference type="InterPro" id="IPR043202">
    <property type="entry name" value="Band-7_stomatin-like"/>
</dbReference>
<dbReference type="InterPro" id="IPR001107">
    <property type="entry name" value="Band_7"/>
</dbReference>
<dbReference type="InterPro" id="IPR036013">
    <property type="entry name" value="Band_7/SPFH_dom_sf"/>
</dbReference>
<dbReference type="InterPro" id="IPR018080">
    <property type="entry name" value="Band_7/stomatin-like_CS"/>
</dbReference>
<dbReference type="InterPro" id="IPR001972">
    <property type="entry name" value="Stomatin_HflK_fam"/>
</dbReference>
<dbReference type="PANTHER" id="PTHR10264">
    <property type="entry name" value="BAND 7 PROTEIN-RELATED"/>
    <property type="match status" value="1"/>
</dbReference>
<dbReference type="PANTHER" id="PTHR10264:SF127">
    <property type="entry name" value="PODOCIN"/>
    <property type="match status" value="1"/>
</dbReference>
<dbReference type="Pfam" id="PF01145">
    <property type="entry name" value="Band_7"/>
    <property type="match status" value="1"/>
</dbReference>
<dbReference type="PRINTS" id="PR00721">
    <property type="entry name" value="STOMATIN"/>
</dbReference>
<dbReference type="SMART" id="SM00244">
    <property type="entry name" value="PHB"/>
    <property type="match status" value="1"/>
</dbReference>
<dbReference type="SUPFAM" id="SSF117892">
    <property type="entry name" value="Band 7/SPFH domain"/>
    <property type="match status" value="1"/>
</dbReference>
<dbReference type="PROSITE" id="PS01270">
    <property type="entry name" value="BAND_7"/>
    <property type="match status" value="1"/>
</dbReference>
<feature type="chain" id="PRO_0000311706" description="Band 7 protein AGAP004871">
    <location>
        <begin position="1"/>
        <end position="280"/>
    </location>
</feature>
<feature type="transmembrane region" description="Helical" evidence="1">
    <location>
        <begin position="23"/>
        <end position="43"/>
    </location>
</feature>
<proteinExistence type="inferred from homology"/>
<sequence>MKNSLLLYAEDETNGEASTCGRILIFLSWVLVVLTMPFSLLVCFKVVQEYERAVIFRLGRLMQGGAKGPGIFFILPCIDAYARVDLRTRTYDVPPQEVLTKDSVTVSVDAVVYYRVSNATVSIANVENAHHSTRLLAQTTLRNTMGTRHLHEILSERMTISGSMQLSLDEATEAWGIKVERVEIKDVRLPVQLQRAMAAEAEAAREARAKVIAAEGEQKASRALREASEVIGDSPAALQLRYLQTLNTISAEKNSTIVFPLPIDILTYFMKSKEAFVPNA</sequence>
<accession>Q7PPU9</accession>
<gene>
    <name type="ORF">AGAP004871</name>
</gene>
<evidence type="ECO:0000255" key="1"/>
<evidence type="ECO:0000312" key="2">
    <source>
        <dbReference type="EMBL" id="EAA09720.4"/>
    </source>
</evidence>
<protein>
    <recommendedName>
        <fullName>Band 7 protein AGAP004871</fullName>
    </recommendedName>
</protein>
<name>BND7A_ANOGA</name>